<gene>
    <name evidence="1" type="primary">ycgN</name>
    <name type="ordered locus">SNSL254_A1950</name>
</gene>
<reference key="1">
    <citation type="journal article" date="2011" name="J. Bacteriol.">
        <title>Comparative genomics of 28 Salmonella enterica isolates: evidence for CRISPR-mediated adaptive sublineage evolution.</title>
        <authorList>
            <person name="Fricke W.F."/>
            <person name="Mammel M.K."/>
            <person name="McDermott P.F."/>
            <person name="Tartera C."/>
            <person name="White D.G."/>
            <person name="Leclerc J.E."/>
            <person name="Ravel J."/>
            <person name="Cebula T.A."/>
        </authorList>
    </citation>
    <scope>NUCLEOTIDE SEQUENCE [LARGE SCALE GENOMIC DNA]</scope>
    <source>
        <strain>SL254</strain>
    </source>
</reference>
<name>YCGN_SALNS</name>
<dbReference type="EMBL" id="CP001113">
    <property type="protein sequence ID" value="ACF63458.1"/>
    <property type="molecule type" value="Genomic_DNA"/>
</dbReference>
<dbReference type="SMR" id="B4SUK4"/>
<dbReference type="KEGG" id="see:SNSL254_A1950"/>
<dbReference type="HOGENOM" id="CLU_109769_0_1_6"/>
<dbReference type="Proteomes" id="UP000008824">
    <property type="component" value="Chromosome"/>
</dbReference>
<dbReference type="HAMAP" id="MF_00676">
    <property type="entry name" value="UPF0260"/>
    <property type="match status" value="1"/>
</dbReference>
<dbReference type="InterPro" id="IPR005358">
    <property type="entry name" value="Puta_zinc/iron-chelating_dom"/>
</dbReference>
<dbReference type="InterPro" id="IPR008228">
    <property type="entry name" value="UCP006173"/>
</dbReference>
<dbReference type="NCBIfam" id="NF003498">
    <property type="entry name" value="PRK05170.1-1"/>
    <property type="match status" value="1"/>
</dbReference>
<dbReference type="NCBIfam" id="NF003501">
    <property type="entry name" value="PRK05170.1-5"/>
    <property type="match status" value="1"/>
</dbReference>
<dbReference type="NCBIfam" id="NF003503">
    <property type="entry name" value="PRK05170.2-1"/>
    <property type="match status" value="1"/>
</dbReference>
<dbReference type="NCBIfam" id="NF003507">
    <property type="entry name" value="PRK05170.2-5"/>
    <property type="match status" value="1"/>
</dbReference>
<dbReference type="PANTHER" id="PTHR37421">
    <property type="entry name" value="UPF0260 PROTEIN YCGN"/>
    <property type="match status" value="1"/>
</dbReference>
<dbReference type="PANTHER" id="PTHR37421:SF1">
    <property type="entry name" value="UPF0260 PROTEIN YCGN"/>
    <property type="match status" value="1"/>
</dbReference>
<dbReference type="Pfam" id="PF03692">
    <property type="entry name" value="CxxCxxCC"/>
    <property type="match status" value="1"/>
</dbReference>
<dbReference type="PIRSF" id="PIRSF006173">
    <property type="entry name" value="UCP006173"/>
    <property type="match status" value="1"/>
</dbReference>
<feature type="chain" id="PRO_1000131635" description="UPF0260 protein YcgN">
    <location>
        <begin position="1"/>
        <end position="153"/>
    </location>
</feature>
<accession>B4SUK4</accession>
<evidence type="ECO:0000255" key="1">
    <source>
        <dbReference type="HAMAP-Rule" id="MF_00676"/>
    </source>
</evidence>
<protein>
    <recommendedName>
        <fullName evidence="1">UPF0260 protein YcgN</fullName>
    </recommendedName>
</protein>
<organism>
    <name type="scientific">Salmonella newport (strain SL254)</name>
    <dbReference type="NCBI Taxonomy" id="423368"/>
    <lineage>
        <taxon>Bacteria</taxon>
        <taxon>Pseudomonadati</taxon>
        <taxon>Pseudomonadota</taxon>
        <taxon>Gammaproteobacteria</taxon>
        <taxon>Enterobacterales</taxon>
        <taxon>Enterobacteriaceae</taxon>
        <taxon>Salmonella</taxon>
    </lineage>
</organism>
<proteinExistence type="inferred from homology"/>
<sequence>MADTLMSDTPFWQRKTLDEMTDAEWESLCDGCGQCCLHKLMDEDTDEIYFTNVACRQLNIKTCQCRHYERRFEFEPDCIKLTRENLPDFEWLPMTCAYRLLAEGKPLPTWHPLLTGSKAAMHGERISVRHIAVKESEVRDWQDHILNKPSWAE</sequence>
<comment type="similarity">
    <text evidence="1">Belongs to the UPF0260 family.</text>
</comment>